<evidence type="ECO:0000255" key="1">
    <source>
        <dbReference type="HAMAP-Rule" id="MF_00099"/>
    </source>
</evidence>
<evidence type="ECO:0000305" key="2"/>
<sequence length="345" mass="36509">MVVDDSAVVRQVVAGLLADDPAIEVIAAVADPILAIARMKVQWPDVFVLDIEMPRMDGITFLKKIMAERPTPVVICSTLTEKGAQTSMAALSAGAVAIITKPKLGLKQFLVDASDDLISAVKAAARANVKRLQVVEKLTADAILPASDRHDAMLQTTERVVALGTSTGGTQALEVVLTALPRVTPGIVIVQHMPEKFTAEFANRLNGLCQITVREAKNNDRVVPGRALIAPGGKHMLLRRNGAQYSVEVLDGPLVNRHRPSVDVLFRSVARCAGANALGVIMTGMGDDGAAGLAEMRKAGARTLAQDEESCVVYGMPKEAVKRGGVERSVPLGAIAREIMAQMAG</sequence>
<feature type="chain" id="PRO_0000264305" description="Protein-glutamate methylesterase/protein-glutamine glutaminase 2">
    <location>
        <begin position="1"/>
        <end position="345"/>
    </location>
</feature>
<feature type="domain" description="Response regulatory" evidence="1">
    <location>
        <begin position="1"/>
        <end position="116"/>
    </location>
</feature>
<feature type="domain" description="CheB-type methylesterase" evidence="1">
    <location>
        <begin position="154"/>
        <end position="345"/>
    </location>
</feature>
<feature type="active site" evidence="1">
    <location>
        <position position="166"/>
    </location>
</feature>
<feature type="active site" evidence="1">
    <location>
        <position position="192"/>
    </location>
</feature>
<feature type="active site" evidence="1">
    <location>
        <position position="288"/>
    </location>
</feature>
<feature type="modified residue" description="4-aspartylphosphate" evidence="1">
    <location>
        <position position="50"/>
    </location>
</feature>
<reference key="1">
    <citation type="submission" date="2006-02" db="EMBL/GenBank/DDBJ databases">
        <title>Complete sequence of chromosome of Rhodoferax ferrireducens DSM 15236.</title>
        <authorList>
            <person name="Copeland A."/>
            <person name="Lucas S."/>
            <person name="Lapidus A."/>
            <person name="Barry K."/>
            <person name="Detter J.C."/>
            <person name="Glavina del Rio T."/>
            <person name="Hammon N."/>
            <person name="Israni S."/>
            <person name="Pitluck S."/>
            <person name="Brettin T."/>
            <person name="Bruce D."/>
            <person name="Han C."/>
            <person name="Tapia R."/>
            <person name="Gilna P."/>
            <person name="Kiss H."/>
            <person name="Schmutz J."/>
            <person name="Larimer F."/>
            <person name="Land M."/>
            <person name="Kyrpides N."/>
            <person name="Ivanova N."/>
            <person name="Richardson P."/>
        </authorList>
    </citation>
    <scope>NUCLEOTIDE SEQUENCE [LARGE SCALE GENOMIC DNA]</scope>
    <source>
        <strain>ATCC BAA-621 / DSM 15236 / T118</strain>
    </source>
</reference>
<dbReference type="EC" id="3.1.1.61" evidence="1"/>
<dbReference type="EC" id="3.5.1.44" evidence="1"/>
<dbReference type="EMBL" id="CP000267">
    <property type="protein sequence ID" value="ABD68654.1"/>
    <property type="status" value="ALT_INIT"/>
    <property type="molecule type" value="Genomic_DNA"/>
</dbReference>
<dbReference type="RefSeq" id="WP_011463227.1">
    <property type="nucleotide sequence ID" value="NC_007908.1"/>
</dbReference>
<dbReference type="SMR" id="Q21ZZ9"/>
<dbReference type="STRING" id="338969.Rfer_0906"/>
<dbReference type="KEGG" id="rfr:Rfer_0906"/>
<dbReference type="eggNOG" id="COG2201">
    <property type="taxonomic scope" value="Bacteria"/>
</dbReference>
<dbReference type="HOGENOM" id="CLU_000445_51_0_4"/>
<dbReference type="OrthoDB" id="9793421at2"/>
<dbReference type="Proteomes" id="UP000008332">
    <property type="component" value="Chromosome"/>
</dbReference>
<dbReference type="GO" id="GO:0005737">
    <property type="term" value="C:cytoplasm"/>
    <property type="evidence" value="ECO:0007669"/>
    <property type="project" value="UniProtKB-SubCell"/>
</dbReference>
<dbReference type="GO" id="GO:0000156">
    <property type="term" value="F:phosphorelay response regulator activity"/>
    <property type="evidence" value="ECO:0007669"/>
    <property type="project" value="InterPro"/>
</dbReference>
<dbReference type="GO" id="GO:0008984">
    <property type="term" value="F:protein-glutamate methylesterase activity"/>
    <property type="evidence" value="ECO:0007669"/>
    <property type="project" value="UniProtKB-UniRule"/>
</dbReference>
<dbReference type="GO" id="GO:0050568">
    <property type="term" value="F:protein-glutamine glutaminase activity"/>
    <property type="evidence" value="ECO:0007669"/>
    <property type="project" value="UniProtKB-UniRule"/>
</dbReference>
<dbReference type="GO" id="GO:0006935">
    <property type="term" value="P:chemotaxis"/>
    <property type="evidence" value="ECO:0007669"/>
    <property type="project" value="UniProtKB-UniRule"/>
</dbReference>
<dbReference type="CDD" id="cd16432">
    <property type="entry name" value="CheB_Rec"/>
    <property type="match status" value="1"/>
</dbReference>
<dbReference type="CDD" id="cd17541">
    <property type="entry name" value="REC_CheB-like"/>
    <property type="match status" value="1"/>
</dbReference>
<dbReference type="Gene3D" id="3.40.50.2300">
    <property type="match status" value="1"/>
</dbReference>
<dbReference type="Gene3D" id="3.40.50.180">
    <property type="entry name" value="Methylesterase CheB, C-terminal domain"/>
    <property type="match status" value="1"/>
</dbReference>
<dbReference type="HAMAP" id="MF_00099">
    <property type="entry name" value="CheB_chemtxs"/>
    <property type="match status" value="1"/>
</dbReference>
<dbReference type="InterPro" id="IPR008248">
    <property type="entry name" value="CheB-like"/>
</dbReference>
<dbReference type="InterPro" id="IPR035909">
    <property type="entry name" value="CheB_C"/>
</dbReference>
<dbReference type="InterPro" id="IPR011006">
    <property type="entry name" value="CheY-like_superfamily"/>
</dbReference>
<dbReference type="InterPro" id="IPR000673">
    <property type="entry name" value="Sig_transdc_resp-reg_Me-estase"/>
</dbReference>
<dbReference type="InterPro" id="IPR001789">
    <property type="entry name" value="Sig_transdc_resp-reg_receiver"/>
</dbReference>
<dbReference type="NCBIfam" id="NF001965">
    <property type="entry name" value="PRK00742.1"/>
    <property type="match status" value="1"/>
</dbReference>
<dbReference type="NCBIfam" id="NF009206">
    <property type="entry name" value="PRK12555.1"/>
    <property type="match status" value="1"/>
</dbReference>
<dbReference type="PANTHER" id="PTHR42872">
    <property type="entry name" value="PROTEIN-GLUTAMATE METHYLESTERASE/PROTEIN-GLUTAMINE GLUTAMINASE"/>
    <property type="match status" value="1"/>
</dbReference>
<dbReference type="PANTHER" id="PTHR42872:SF6">
    <property type="entry name" value="PROTEIN-GLUTAMATE METHYLESTERASE_PROTEIN-GLUTAMINE GLUTAMINASE"/>
    <property type="match status" value="1"/>
</dbReference>
<dbReference type="Pfam" id="PF01339">
    <property type="entry name" value="CheB_methylest"/>
    <property type="match status" value="1"/>
</dbReference>
<dbReference type="Pfam" id="PF00072">
    <property type="entry name" value="Response_reg"/>
    <property type="match status" value="1"/>
</dbReference>
<dbReference type="PIRSF" id="PIRSF000876">
    <property type="entry name" value="RR_chemtxs_CheB"/>
    <property type="match status" value="1"/>
</dbReference>
<dbReference type="SMART" id="SM00448">
    <property type="entry name" value="REC"/>
    <property type="match status" value="1"/>
</dbReference>
<dbReference type="SUPFAM" id="SSF52172">
    <property type="entry name" value="CheY-like"/>
    <property type="match status" value="1"/>
</dbReference>
<dbReference type="SUPFAM" id="SSF52738">
    <property type="entry name" value="Methylesterase CheB, C-terminal domain"/>
    <property type="match status" value="1"/>
</dbReference>
<dbReference type="PROSITE" id="PS50122">
    <property type="entry name" value="CHEB"/>
    <property type="match status" value="1"/>
</dbReference>
<dbReference type="PROSITE" id="PS50110">
    <property type="entry name" value="RESPONSE_REGULATORY"/>
    <property type="match status" value="1"/>
</dbReference>
<organism>
    <name type="scientific">Albidiferax ferrireducens (strain ATCC BAA-621 / DSM 15236 / T118)</name>
    <name type="common">Rhodoferax ferrireducens</name>
    <dbReference type="NCBI Taxonomy" id="338969"/>
    <lineage>
        <taxon>Bacteria</taxon>
        <taxon>Pseudomonadati</taxon>
        <taxon>Pseudomonadota</taxon>
        <taxon>Betaproteobacteria</taxon>
        <taxon>Burkholderiales</taxon>
        <taxon>Comamonadaceae</taxon>
        <taxon>Rhodoferax</taxon>
    </lineage>
</organism>
<proteinExistence type="inferred from homology"/>
<keyword id="KW-0145">Chemotaxis</keyword>
<keyword id="KW-0963">Cytoplasm</keyword>
<keyword id="KW-0378">Hydrolase</keyword>
<keyword id="KW-0597">Phosphoprotein</keyword>
<keyword id="KW-1185">Reference proteome</keyword>
<accession>Q21ZZ9</accession>
<name>CHEB2_ALBFT</name>
<gene>
    <name evidence="1" type="primary">cheB2</name>
    <name type="ordered locus">Rfer_0906</name>
</gene>
<protein>
    <recommendedName>
        <fullName evidence="1">Protein-glutamate methylesterase/protein-glutamine glutaminase 2</fullName>
        <ecNumber evidence="1">3.1.1.61</ecNumber>
        <ecNumber evidence="1">3.5.1.44</ecNumber>
    </recommendedName>
</protein>
<comment type="function">
    <text evidence="1">Involved in chemotaxis. Part of a chemotaxis signal transduction system that modulates chemotaxis in response to various stimuli. Catalyzes the demethylation of specific methylglutamate residues introduced into the chemoreceptors (methyl-accepting chemotaxis proteins or MCP) by CheR. Also mediates the irreversible deamidation of specific glutamine residues to glutamic acid.</text>
</comment>
<comment type="catalytic activity">
    <reaction evidence="1">
        <text>[protein]-L-glutamate 5-O-methyl ester + H2O = L-glutamyl-[protein] + methanol + H(+)</text>
        <dbReference type="Rhea" id="RHEA:23236"/>
        <dbReference type="Rhea" id="RHEA-COMP:10208"/>
        <dbReference type="Rhea" id="RHEA-COMP:10311"/>
        <dbReference type="ChEBI" id="CHEBI:15377"/>
        <dbReference type="ChEBI" id="CHEBI:15378"/>
        <dbReference type="ChEBI" id="CHEBI:17790"/>
        <dbReference type="ChEBI" id="CHEBI:29973"/>
        <dbReference type="ChEBI" id="CHEBI:82795"/>
        <dbReference type="EC" id="3.1.1.61"/>
    </reaction>
</comment>
<comment type="catalytic activity">
    <reaction evidence="1">
        <text>L-glutaminyl-[protein] + H2O = L-glutamyl-[protein] + NH4(+)</text>
        <dbReference type="Rhea" id="RHEA:16441"/>
        <dbReference type="Rhea" id="RHEA-COMP:10207"/>
        <dbReference type="Rhea" id="RHEA-COMP:10208"/>
        <dbReference type="ChEBI" id="CHEBI:15377"/>
        <dbReference type="ChEBI" id="CHEBI:28938"/>
        <dbReference type="ChEBI" id="CHEBI:29973"/>
        <dbReference type="ChEBI" id="CHEBI:30011"/>
        <dbReference type="EC" id="3.5.1.44"/>
    </reaction>
</comment>
<comment type="subcellular location">
    <subcellularLocation>
        <location evidence="1">Cytoplasm</location>
    </subcellularLocation>
</comment>
<comment type="domain">
    <text evidence="1">Contains a C-terminal catalytic domain, and an N-terminal region which modulates catalytic activity.</text>
</comment>
<comment type="PTM">
    <text evidence="1">Phosphorylated by CheA. Phosphorylation of the N-terminal regulatory domain activates the methylesterase activity.</text>
</comment>
<comment type="similarity">
    <text evidence="1">Belongs to the CheB family.</text>
</comment>
<comment type="sequence caution" evidence="2">
    <conflict type="erroneous initiation">
        <sequence resource="EMBL-CDS" id="ABD68654"/>
    </conflict>
</comment>